<keyword id="KW-0002">3D-structure</keyword>
<keyword id="KW-0028">Amino-acid biosynthesis</keyword>
<keyword id="KW-0210">Decarboxylase</keyword>
<keyword id="KW-0456">Lyase</keyword>
<keyword id="KW-0457">Lysine biosynthesis</keyword>
<keyword id="KW-0663">Pyridoxal phosphate</keyword>
<keyword id="KW-1185">Reference proteome</keyword>
<organism>
    <name type="scientific">Escherichia coli (strain K12)</name>
    <dbReference type="NCBI Taxonomy" id="83333"/>
    <lineage>
        <taxon>Bacteria</taxon>
        <taxon>Pseudomonadati</taxon>
        <taxon>Pseudomonadota</taxon>
        <taxon>Gammaproteobacteria</taxon>
        <taxon>Enterobacterales</taxon>
        <taxon>Enterobacteriaceae</taxon>
        <taxon>Escherichia</taxon>
    </lineage>
</organism>
<accession>P00861</accession>
<accession>Q2M9Z9</accession>
<reference key="1">
    <citation type="journal article" date="1983" name="J. Mol. Biol.">
        <title>Regulation of diaminopimelate decarboxylase synthesis in Escherichia coli. II. Nucleotide sequence of the lysA gene and its regulatory region.</title>
        <authorList>
            <person name="Stragier P."/>
            <person name="Danos O."/>
            <person name="Patte J.-C."/>
        </authorList>
    </citation>
    <scope>NUCLEOTIDE SEQUENCE [GENOMIC DNA]</scope>
</reference>
<reference key="2">
    <citation type="journal article" date="1997" name="Science">
        <title>The complete genome sequence of Escherichia coli K-12.</title>
        <authorList>
            <person name="Blattner F.R."/>
            <person name="Plunkett G. III"/>
            <person name="Bloch C.A."/>
            <person name="Perna N.T."/>
            <person name="Burland V."/>
            <person name="Riley M."/>
            <person name="Collado-Vides J."/>
            <person name="Glasner J.D."/>
            <person name="Rode C.K."/>
            <person name="Mayhew G.F."/>
            <person name="Gregor J."/>
            <person name="Davis N.W."/>
            <person name="Kirkpatrick H.A."/>
            <person name="Goeden M.A."/>
            <person name="Rose D.J."/>
            <person name="Mau B."/>
            <person name="Shao Y."/>
        </authorList>
    </citation>
    <scope>NUCLEOTIDE SEQUENCE [LARGE SCALE GENOMIC DNA]</scope>
    <source>
        <strain>K12 / MG1655 / ATCC 47076</strain>
    </source>
</reference>
<reference key="3">
    <citation type="journal article" date="2006" name="Mol. Syst. Biol.">
        <title>Highly accurate genome sequences of Escherichia coli K-12 strains MG1655 and W3110.</title>
        <authorList>
            <person name="Hayashi K."/>
            <person name="Morooka N."/>
            <person name="Yamamoto Y."/>
            <person name="Fujita K."/>
            <person name="Isono K."/>
            <person name="Choi S."/>
            <person name="Ohtsubo E."/>
            <person name="Baba T."/>
            <person name="Wanner B.L."/>
            <person name="Mori H."/>
            <person name="Horiuchi T."/>
        </authorList>
    </citation>
    <scope>NUCLEOTIDE SEQUENCE [LARGE SCALE GENOMIC DNA]</scope>
    <source>
        <strain>K12 / W3110 / ATCC 27325 / DSM 5911</strain>
    </source>
</reference>
<reference key="4">
    <citation type="journal article" date="1965" name="Biochem. J.">
        <title>Purification and properties of diaminopimelate decarboxylase from Escherichia coli.</title>
        <authorList>
            <person name="White P.J."/>
            <person name="Kelly B."/>
        </authorList>
    </citation>
    <scope>FUNCTION</scope>
    <scope>CATALYTIC ACTIVITY</scope>
    <scope>SUBSTRATE SPECIFICITY</scope>
    <scope>COFACTOR</scope>
    <scope>ACTIVITY REGULATION</scope>
    <scope>BIOPHYSICOCHEMICAL PROPERTIES</scope>
    <scope>PATHWAY</scope>
    <source>
        <strain>ATCC 9637 / CCM 2024 / DSM 1116 / NCIMB 8666 / NRRL B-766 / W</strain>
    </source>
</reference>
<reference key="5">
    <citation type="journal article" date="1983" name="J. Bacteriol.">
        <title>Regulatory pattern of the Escherichia coli lysA gene: expression of chromosomal lysA-lacZ fusions.</title>
        <authorList>
            <person name="Stragier P."/>
            <person name="Borne F."/>
            <person name="Richaud F."/>
            <person name="Richaud C."/>
            <person name="Patte J.C."/>
        </authorList>
    </citation>
    <scope>INDUCTION</scope>
</reference>
<reference key="6">
    <citation type="journal article" date="1983" name="J. Mol. Biol.">
        <title>Regulation of diaminopimelate decarboxylase synthesis in Escherichia coli. I. Identification of a lysR gene encoding an activator of the lysA gene.</title>
        <authorList>
            <person name="Stragier P."/>
            <person name="Richaud F."/>
            <person name="Borne F."/>
            <person name="Patte J.C."/>
        </authorList>
    </citation>
    <scope>INDUCTION</scope>
</reference>
<reference key="7">
    <citation type="journal article" date="1997" name="Electrophoresis">
        <title>Escherichia coli proteome analysis using the gene-protein database.</title>
        <authorList>
            <person name="VanBogelen R.A."/>
            <person name="Abshire K.Z."/>
            <person name="Moldover B."/>
            <person name="Olson E.R."/>
            <person name="Neidhardt F.C."/>
        </authorList>
    </citation>
    <scope>IDENTIFICATION BY 2D-GEL</scope>
</reference>
<reference key="8">
    <citation type="journal article" date="2002" name="Acta Crystallogr. D">
        <title>Crystallization of diaminopimelate decarboxylase from Escherichia coli, a stereospecific D-amino-acid decarboxylase.</title>
        <authorList>
            <person name="Momany C."/>
            <person name="Levdikov V."/>
            <person name="Blagova L."/>
            <person name="Crews K."/>
        </authorList>
    </citation>
    <scope>CRYSTALLIZATION</scope>
    <scope>FUNCTION</scope>
    <scope>CATALYTIC ACTIVITY</scope>
    <scope>COFACTOR</scope>
</reference>
<reference key="9">
    <citation type="journal article" date="2008" name="J. Biol. Chem.">
        <title>The catalytic intermediate stabilized by a 'down' active site loop for diaminopimelate decarboxylase from Helicobacter pylori. Enzymatic characterization with crystal structure analysis.</title>
        <authorList>
            <person name="Hu T."/>
            <person name="Wu D."/>
            <person name="Chen J."/>
            <person name="Ding J."/>
            <person name="Jiang H."/>
            <person name="Shen X."/>
        </authorList>
    </citation>
    <scope>FUNCTION</scope>
    <scope>CATALYTIC ACTIVITY</scope>
    <scope>KINETIC PARAMETERS</scope>
    <source>
        <strain>K12 / JM109 / ATCC 53323</strain>
    </source>
</reference>
<reference key="10">
    <citation type="submission" date="2009-02" db="PDB data bank">
        <title>Diaminopimelate decarboxylase uses a versatile active site for stereospecific decarboxylation.</title>
        <authorList>
            <person name="Levdikov V."/>
            <person name="Blagova L."/>
            <person name="Bose N."/>
            <person name="Momany C."/>
        </authorList>
    </citation>
    <scope>X-RAY CRYSTALLOGRAPHY (2.1 ANGSTROMS) IN COMPLEXES WITH PYRIDOXAL PHOSPHATE AND LYSINE</scope>
</reference>
<dbReference type="EC" id="4.1.1.20" evidence="1 2 3 4"/>
<dbReference type="EMBL" id="J01614">
    <property type="protein sequence ID" value="AAA83861.1"/>
    <property type="molecule type" value="Genomic_DNA"/>
</dbReference>
<dbReference type="EMBL" id="U29581">
    <property type="protein sequence ID" value="AAB40485.1"/>
    <property type="molecule type" value="Genomic_DNA"/>
</dbReference>
<dbReference type="EMBL" id="U00096">
    <property type="protein sequence ID" value="AAC75877.1"/>
    <property type="molecule type" value="Genomic_DNA"/>
</dbReference>
<dbReference type="EMBL" id="AP009048">
    <property type="protein sequence ID" value="BAE76907.1"/>
    <property type="molecule type" value="Genomic_DNA"/>
</dbReference>
<dbReference type="PIR" id="A01078">
    <property type="entry name" value="DCECD"/>
</dbReference>
<dbReference type="RefSeq" id="NP_417315.1">
    <property type="nucleotide sequence ID" value="NC_000913.3"/>
</dbReference>
<dbReference type="RefSeq" id="WP_001120711.1">
    <property type="nucleotide sequence ID" value="NZ_SSUV01000026.1"/>
</dbReference>
<dbReference type="PDB" id="1KNW">
    <property type="method" value="X-ray"/>
    <property type="resolution" value="2.10 A"/>
    <property type="chains" value="A=1-420"/>
</dbReference>
<dbReference type="PDB" id="1KO0">
    <property type="method" value="X-ray"/>
    <property type="resolution" value="2.20 A"/>
    <property type="chains" value="A=1-420"/>
</dbReference>
<dbReference type="PDBsum" id="1KNW"/>
<dbReference type="PDBsum" id="1KO0"/>
<dbReference type="SMR" id="P00861"/>
<dbReference type="BioGRID" id="4261891">
    <property type="interactions" value="12"/>
</dbReference>
<dbReference type="BioGRID" id="851640">
    <property type="interactions" value="2"/>
</dbReference>
<dbReference type="DIP" id="DIP-10132N"/>
<dbReference type="FunCoup" id="P00861">
    <property type="interactions" value="635"/>
</dbReference>
<dbReference type="IntAct" id="P00861">
    <property type="interactions" value="9"/>
</dbReference>
<dbReference type="STRING" id="511145.b2838"/>
<dbReference type="DrugBank" id="DB03814">
    <property type="generic name" value="2-(N-morpholino)ethanesulfonic acid"/>
</dbReference>
<dbReference type="DrugBank" id="DB03252">
    <property type="generic name" value="D-Lysine"/>
</dbReference>
<dbReference type="jPOST" id="P00861"/>
<dbReference type="PaxDb" id="511145-b2838"/>
<dbReference type="EnsemblBacteria" id="AAC75877">
    <property type="protein sequence ID" value="AAC75877"/>
    <property type="gene ID" value="b2838"/>
</dbReference>
<dbReference type="GeneID" id="947313"/>
<dbReference type="KEGG" id="ecj:JW2806"/>
<dbReference type="KEGG" id="eco:b2838"/>
<dbReference type="KEGG" id="ecoc:C3026_15585"/>
<dbReference type="PATRIC" id="fig|1411691.4.peg.3896"/>
<dbReference type="EchoBASE" id="EB0544"/>
<dbReference type="eggNOG" id="COG0019">
    <property type="taxonomic scope" value="Bacteria"/>
</dbReference>
<dbReference type="HOGENOM" id="CLU_026444_0_2_6"/>
<dbReference type="InParanoid" id="P00861"/>
<dbReference type="OMA" id="HGNAKSP"/>
<dbReference type="OrthoDB" id="9802241at2"/>
<dbReference type="PhylomeDB" id="P00861"/>
<dbReference type="BioCyc" id="EcoCyc:DIAMINOPIMDECARB-MONOMER"/>
<dbReference type="BioCyc" id="MetaCyc:DIAMINOPIMDECARB-MONOMER"/>
<dbReference type="BRENDA" id="4.1.1.20">
    <property type="organism ID" value="2026"/>
</dbReference>
<dbReference type="SABIO-RK" id="P00861"/>
<dbReference type="UniPathway" id="UPA00034">
    <property type="reaction ID" value="UER00027"/>
</dbReference>
<dbReference type="EvolutionaryTrace" id="P00861"/>
<dbReference type="PRO" id="PR:P00861"/>
<dbReference type="Proteomes" id="UP000000625">
    <property type="component" value="Chromosome"/>
</dbReference>
<dbReference type="GO" id="GO:0008836">
    <property type="term" value="F:diaminopimelate decarboxylase activity"/>
    <property type="evidence" value="ECO:0000314"/>
    <property type="project" value="EcoCyc"/>
</dbReference>
<dbReference type="GO" id="GO:0042803">
    <property type="term" value="F:protein homodimerization activity"/>
    <property type="evidence" value="ECO:0000314"/>
    <property type="project" value="EcoCyc"/>
</dbReference>
<dbReference type="GO" id="GO:0030170">
    <property type="term" value="F:pyridoxal phosphate binding"/>
    <property type="evidence" value="ECO:0000314"/>
    <property type="project" value="EcoCyc"/>
</dbReference>
<dbReference type="GO" id="GO:0009089">
    <property type="term" value="P:lysine biosynthetic process via diaminopimelate"/>
    <property type="evidence" value="ECO:0000315"/>
    <property type="project" value="EcoCyc"/>
</dbReference>
<dbReference type="CDD" id="cd06828">
    <property type="entry name" value="PLPDE_III_DapDC"/>
    <property type="match status" value="1"/>
</dbReference>
<dbReference type="FunFam" id="2.40.37.10:FF:000007">
    <property type="entry name" value="Diaminopimelate decarboxylase"/>
    <property type="match status" value="1"/>
</dbReference>
<dbReference type="FunFam" id="3.20.20.10:FF:000009">
    <property type="entry name" value="Diaminopimelate decarboxylase"/>
    <property type="match status" value="1"/>
</dbReference>
<dbReference type="Gene3D" id="3.20.20.10">
    <property type="entry name" value="Alanine racemase"/>
    <property type="match status" value="1"/>
</dbReference>
<dbReference type="Gene3D" id="2.40.37.10">
    <property type="entry name" value="Lyase, Ornithine Decarboxylase, Chain A, domain 1"/>
    <property type="match status" value="1"/>
</dbReference>
<dbReference type="HAMAP" id="MF_02120">
    <property type="entry name" value="LysA"/>
    <property type="match status" value="1"/>
</dbReference>
<dbReference type="InterPro" id="IPR009006">
    <property type="entry name" value="Ala_racemase/Decarboxylase_C"/>
</dbReference>
<dbReference type="InterPro" id="IPR002986">
    <property type="entry name" value="DAP_deCOOHase_LysA"/>
</dbReference>
<dbReference type="InterPro" id="IPR022643">
    <property type="entry name" value="De-COase2_C"/>
</dbReference>
<dbReference type="InterPro" id="IPR022657">
    <property type="entry name" value="De-COase2_CS"/>
</dbReference>
<dbReference type="InterPro" id="IPR022644">
    <property type="entry name" value="De-COase2_N"/>
</dbReference>
<dbReference type="InterPro" id="IPR022653">
    <property type="entry name" value="De-COase2_pyr-phos_BS"/>
</dbReference>
<dbReference type="InterPro" id="IPR000183">
    <property type="entry name" value="Orn/DAP/Arg_de-COase"/>
</dbReference>
<dbReference type="InterPro" id="IPR029066">
    <property type="entry name" value="PLP-binding_barrel"/>
</dbReference>
<dbReference type="NCBIfam" id="TIGR01048">
    <property type="entry name" value="lysA"/>
    <property type="match status" value="1"/>
</dbReference>
<dbReference type="PANTHER" id="PTHR43727">
    <property type="entry name" value="DIAMINOPIMELATE DECARBOXYLASE"/>
    <property type="match status" value="1"/>
</dbReference>
<dbReference type="PANTHER" id="PTHR43727:SF2">
    <property type="entry name" value="GROUP IV DECARBOXYLASE"/>
    <property type="match status" value="1"/>
</dbReference>
<dbReference type="Pfam" id="PF02784">
    <property type="entry name" value="Orn_Arg_deC_N"/>
    <property type="match status" value="1"/>
</dbReference>
<dbReference type="Pfam" id="PF00278">
    <property type="entry name" value="Orn_DAP_Arg_deC"/>
    <property type="match status" value="1"/>
</dbReference>
<dbReference type="PRINTS" id="PR01181">
    <property type="entry name" value="DAPDCRBXLASE"/>
</dbReference>
<dbReference type="PRINTS" id="PR01179">
    <property type="entry name" value="ODADCRBXLASE"/>
</dbReference>
<dbReference type="SUPFAM" id="SSF50621">
    <property type="entry name" value="Alanine racemase C-terminal domain-like"/>
    <property type="match status" value="1"/>
</dbReference>
<dbReference type="SUPFAM" id="SSF51419">
    <property type="entry name" value="PLP-binding barrel"/>
    <property type="match status" value="1"/>
</dbReference>
<dbReference type="PROSITE" id="PS00878">
    <property type="entry name" value="ODR_DC_2_1"/>
    <property type="match status" value="1"/>
</dbReference>
<dbReference type="PROSITE" id="PS00879">
    <property type="entry name" value="ODR_DC_2_2"/>
    <property type="match status" value="1"/>
</dbReference>
<proteinExistence type="evidence at protein level"/>
<sequence>MPHSLFSTDTDLTAENLLRLPAEFGCPVWVYDAQIIRRQIAALKQFDVVRFAQKACSNIHILRLMREQGVKVDSVSLGEIERALAAGYNPQTHPDDIVFTADVIDQATLERVSELQIPVNAGSVDMLDQLGQVSPGHRVWLRVNPGFGHGHSQKTNTGGENSKHGIWYTDLPAALDVIQRHHLQLVGIHMHIGSGVDYAHLEQVCGAMVRQVIEFGQDLQAISAGGGLSVPYQQGEEAVDTEHYYGLWNAAREQIARHLGHPVKLEIEPGRFLVAQSGVLITQVRSVKQMGSRHFVLVDAGFNDLMRPAMYGSYHHISALAADGRSLEHAPTVETVVAGPLCESGDVFTQQEGGNVETRALPEVKAGDYLVLHDTGAYGASMSSNYNSRPLLPEVLFDNGQARLIRRRQTIEELLALELL</sequence>
<gene>
    <name evidence="1" type="primary">lysA</name>
    <name type="ordered locus">b2838</name>
    <name type="ordered locus">JW2806</name>
</gene>
<evidence type="ECO:0000255" key="1">
    <source>
        <dbReference type="HAMAP-Rule" id="MF_02120"/>
    </source>
</evidence>
<evidence type="ECO:0000269" key="2">
    <source>
    </source>
</evidence>
<evidence type="ECO:0000269" key="3">
    <source>
    </source>
</evidence>
<evidence type="ECO:0000269" key="4">
    <source>
    </source>
</evidence>
<evidence type="ECO:0000269" key="5">
    <source>
    </source>
</evidence>
<evidence type="ECO:0000269" key="6">
    <source>
    </source>
</evidence>
<evidence type="ECO:0000269" key="7">
    <source ref="10"/>
</evidence>
<evidence type="ECO:0000305" key="8">
    <source ref="10"/>
</evidence>
<evidence type="ECO:0007829" key="9">
    <source>
        <dbReference type="PDB" id="1KNW"/>
    </source>
</evidence>
<evidence type="ECO:0007829" key="10">
    <source>
        <dbReference type="PDB" id="1KO0"/>
    </source>
</evidence>
<feature type="chain" id="PRO_0000149923" description="Diaminopimelate decarboxylase">
    <location>
        <begin position="1"/>
        <end position="420"/>
    </location>
</feature>
<feature type="active site" description="Proton donor" evidence="1">
    <location>
        <position position="342"/>
    </location>
</feature>
<feature type="binding site" evidence="8">
    <location>
        <position position="191"/>
    </location>
    <ligand>
        <name>substrate</name>
    </ligand>
</feature>
<feature type="binding site" evidence="7">
    <location>
        <position position="227"/>
    </location>
    <ligand>
        <name>pyridoxal 5'-phosphate</name>
        <dbReference type="ChEBI" id="CHEBI:597326"/>
    </ligand>
</feature>
<feature type="binding site" evidence="1 7">
    <location>
        <begin position="268"/>
        <end position="271"/>
    </location>
    <ligand>
        <name>pyridoxal 5'-phosphate</name>
        <dbReference type="ChEBI" id="CHEBI:597326"/>
    </ligand>
</feature>
<feature type="binding site" evidence="8">
    <location>
        <position position="271"/>
    </location>
    <ligand>
        <name>substrate</name>
    </ligand>
</feature>
<feature type="binding site" evidence="8">
    <location>
        <position position="307"/>
    </location>
    <ligand>
        <name>substrate</name>
    </ligand>
</feature>
<feature type="binding site" evidence="8">
    <location>
        <position position="311"/>
    </location>
    <ligand>
        <name>substrate</name>
    </ligand>
</feature>
<feature type="binding site" evidence="8">
    <location>
        <position position="343"/>
    </location>
    <ligand>
        <name>substrate</name>
    </ligand>
</feature>
<feature type="binding site" evidence="7">
    <location>
        <position position="378"/>
    </location>
    <ligand>
        <name>pyridoxal 5'-phosphate</name>
        <dbReference type="ChEBI" id="CHEBI:597326"/>
    </ligand>
</feature>
<feature type="binding site" evidence="1">
    <location>
        <position position="378"/>
    </location>
    <ligand>
        <name>substrate</name>
    </ligand>
</feature>
<feature type="modified residue" description="N6-(pyridoxal phosphate)lysine" evidence="7">
    <location>
        <position position="54"/>
    </location>
</feature>
<feature type="turn" evidence="9">
    <location>
        <begin position="5"/>
        <end position="7"/>
    </location>
</feature>
<feature type="strand" evidence="9">
    <location>
        <begin position="9"/>
        <end position="11"/>
    </location>
</feature>
<feature type="helix" evidence="9">
    <location>
        <begin position="14"/>
        <end position="24"/>
    </location>
</feature>
<feature type="strand" evidence="9">
    <location>
        <begin position="26"/>
        <end position="32"/>
    </location>
</feature>
<feature type="helix" evidence="9">
    <location>
        <begin position="33"/>
        <end position="41"/>
    </location>
</feature>
<feature type="turn" evidence="9">
    <location>
        <begin position="42"/>
        <end position="45"/>
    </location>
</feature>
<feature type="strand" evidence="9">
    <location>
        <begin position="46"/>
        <end position="52"/>
    </location>
</feature>
<feature type="helix" evidence="9">
    <location>
        <begin position="53"/>
        <end position="55"/>
    </location>
</feature>
<feature type="helix" evidence="9">
    <location>
        <begin position="59"/>
        <end position="67"/>
    </location>
</feature>
<feature type="strand" evidence="9">
    <location>
        <begin position="71"/>
        <end position="74"/>
    </location>
</feature>
<feature type="helix" evidence="9">
    <location>
        <begin position="77"/>
        <end position="85"/>
    </location>
</feature>
<feature type="turn" evidence="9">
    <location>
        <begin position="90"/>
        <end position="92"/>
    </location>
</feature>
<feature type="strand" evidence="9">
    <location>
        <begin position="96"/>
        <end position="102"/>
    </location>
</feature>
<feature type="helix" evidence="9">
    <location>
        <begin position="106"/>
        <end position="115"/>
    </location>
</feature>
<feature type="strand" evidence="9">
    <location>
        <begin position="119"/>
        <end position="123"/>
    </location>
</feature>
<feature type="helix" evidence="9">
    <location>
        <begin position="124"/>
        <end position="133"/>
    </location>
</feature>
<feature type="strand" evidence="9">
    <location>
        <begin position="138"/>
        <end position="144"/>
    </location>
</feature>
<feature type="strand" evidence="10">
    <location>
        <begin position="152"/>
        <end position="155"/>
    </location>
</feature>
<feature type="strand" evidence="9">
    <location>
        <begin position="157"/>
        <end position="159"/>
    </location>
</feature>
<feature type="strand" evidence="9">
    <location>
        <begin position="165"/>
        <end position="167"/>
    </location>
</feature>
<feature type="helix" evidence="9">
    <location>
        <begin position="168"/>
        <end position="170"/>
    </location>
</feature>
<feature type="helix" evidence="9">
    <location>
        <begin position="171"/>
        <end position="180"/>
    </location>
</feature>
<feature type="strand" evidence="9">
    <location>
        <begin position="184"/>
        <end position="189"/>
    </location>
</feature>
<feature type="helix" evidence="9">
    <location>
        <begin position="198"/>
        <end position="215"/>
    </location>
</feature>
<feature type="strand" evidence="9">
    <location>
        <begin position="220"/>
        <end position="223"/>
    </location>
</feature>
<feature type="helix" evidence="9">
    <location>
        <begin position="241"/>
        <end position="259"/>
    </location>
</feature>
<feature type="strand" evidence="9">
    <location>
        <begin position="264"/>
        <end position="267"/>
    </location>
</feature>
<feature type="helix" evidence="9">
    <location>
        <begin position="271"/>
        <end position="274"/>
    </location>
</feature>
<feature type="helix" evidence="9">
    <location>
        <begin position="275"/>
        <end position="277"/>
    </location>
</feature>
<feature type="strand" evidence="9">
    <location>
        <begin position="278"/>
        <end position="290"/>
    </location>
</feature>
<feature type="strand" evidence="9">
    <location>
        <begin position="293"/>
        <end position="299"/>
    </location>
</feature>
<feature type="turn" evidence="9">
    <location>
        <begin position="302"/>
        <end position="304"/>
    </location>
</feature>
<feature type="helix" evidence="9">
    <location>
        <begin position="307"/>
        <end position="311"/>
    </location>
</feature>
<feature type="strand" evidence="9">
    <location>
        <begin position="317"/>
        <end position="320"/>
    </location>
</feature>
<feature type="strand" evidence="9">
    <location>
        <begin position="332"/>
        <end position="338"/>
    </location>
</feature>
<feature type="strand" evidence="9">
    <location>
        <begin position="340"/>
        <end position="343"/>
    </location>
</feature>
<feature type="strand" evidence="9">
    <location>
        <begin position="347"/>
        <end position="350"/>
    </location>
</feature>
<feature type="strand" evidence="9">
    <location>
        <begin position="359"/>
        <end position="362"/>
    </location>
</feature>
<feature type="strand" evidence="9">
    <location>
        <begin position="369"/>
        <end position="372"/>
    </location>
</feature>
<feature type="strand" evidence="9">
    <location>
        <begin position="376"/>
        <end position="379"/>
    </location>
</feature>
<feature type="helix" evidence="9">
    <location>
        <begin position="380"/>
        <end position="382"/>
    </location>
</feature>
<feature type="turn" evidence="9">
    <location>
        <begin position="386"/>
        <end position="388"/>
    </location>
</feature>
<feature type="strand" evidence="9">
    <location>
        <begin position="394"/>
        <end position="398"/>
    </location>
</feature>
<feature type="strand" evidence="9">
    <location>
        <begin position="401"/>
        <end position="406"/>
    </location>
</feature>
<feature type="helix" evidence="9">
    <location>
        <begin position="411"/>
        <end position="415"/>
    </location>
</feature>
<feature type="turn" evidence="9">
    <location>
        <begin position="416"/>
        <end position="418"/>
    </location>
</feature>
<protein>
    <recommendedName>
        <fullName evidence="1">Diaminopimelate decarboxylase</fullName>
        <shortName evidence="1">DAP decarboxylase</shortName>
        <shortName evidence="1">DAPDC</shortName>
        <ecNumber evidence="1 2 3 4">4.1.1.20</ecNumber>
    </recommendedName>
</protein>
<name>DCDA_ECOLI</name>
<comment type="function">
    <text evidence="2 3 4">Specifically catalyzes the decarboxylation of meso-diaminopimelate (meso-DAP) to L-lysine. Is not active against the DD- or LL-isomers of diaminopimelate.</text>
</comment>
<comment type="catalytic activity">
    <reaction evidence="2 3 4">
        <text>meso-2,6-diaminopimelate + H(+) = L-lysine + CO2</text>
        <dbReference type="Rhea" id="RHEA:15101"/>
        <dbReference type="ChEBI" id="CHEBI:15378"/>
        <dbReference type="ChEBI" id="CHEBI:16526"/>
        <dbReference type="ChEBI" id="CHEBI:32551"/>
        <dbReference type="ChEBI" id="CHEBI:57791"/>
        <dbReference type="EC" id="4.1.1.20"/>
    </reaction>
</comment>
<comment type="cofactor">
    <cofactor evidence="2 3">
        <name>pyridoxal 5'-phosphate</name>
        <dbReference type="ChEBI" id="CHEBI:597326"/>
    </cofactor>
</comment>
<comment type="activity regulation">
    <text evidence="3">Is activated by 2,3-dimercaptopropan-1-ol.</text>
</comment>
<comment type="biophysicochemical properties">
    <kinetics>
        <KM evidence="3">1.7 mM for meso-2,6-diaminoheptanedioate (at pH 6.8 and 37 degrees Celsius)</KM>
        <KM evidence="4">1.07 mM for meso-2,6-diaminoheptanedioate (at pH 8)</KM>
    </kinetics>
    <phDependence>
        <text evidence="3">Optimum pH is 6.7-6.8.</text>
    </phDependence>
</comment>
<comment type="pathway">
    <text evidence="3">Amino-acid biosynthesis; L-lysine biosynthesis via DAP pathway; L-lysine from DL-2,6-diaminopimelate: step 1/1.</text>
</comment>
<comment type="interaction">
    <interactant intactId="EBI-553837">
        <id>P00861</id>
    </interactant>
    <interactant intactId="EBI-550918">
        <id>P0AE88</id>
        <label>cpxR</label>
    </interactant>
    <organismsDiffer>false</organismsDiffer>
    <experiments>4</experiments>
</comment>
<comment type="induction">
    <text evidence="5 6">Up-regulated by LysR. Repressed in the presence of lysine.</text>
</comment>
<comment type="similarity">
    <text evidence="1">Belongs to the Orn/Lys/Arg decarboxylase class-II family. LysA subfamily.</text>
</comment>